<proteinExistence type="inferred from homology"/>
<evidence type="ECO:0000255" key="1">
    <source>
        <dbReference type="HAMAP-Rule" id="MF_01385"/>
    </source>
</evidence>
<name>UREF_STAA3</name>
<comment type="function">
    <text evidence="1">Required for maturation of urease via the functional incorporation of the urease nickel metallocenter.</text>
</comment>
<comment type="subunit">
    <text evidence="1">UreD, UreF and UreG form a complex that acts as a GTP-hydrolysis-dependent molecular chaperone, activating the urease apoprotein by helping to assemble the nickel containing metallocenter of UreC. The UreE protein probably delivers the nickel.</text>
</comment>
<comment type="subcellular location">
    <subcellularLocation>
        <location evidence="1">Cytoplasm</location>
    </subcellularLocation>
</comment>
<comment type="similarity">
    <text evidence="1">Belongs to the UreF family.</text>
</comment>
<gene>
    <name evidence="1" type="primary">ureF</name>
    <name type="ordered locus">SAUSA300_2242</name>
</gene>
<feature type="chain" id="PRO_0000344192" description="Urease accessory protein UreF">
    <location>
        <begin position="1"/>
        <end position="229"/>
    </location>
</feature>
<dbReference type="EMBL" id="CP000255">
    <property type="protein sequence ID" value="ABD22468.1"/>
    <property type="molecule type" value="Genomic_DNA"/>
</dbReference>
<dbReference type="RefSeq" id="WP_000565255.1">
    <property type="nucleotide sequence ID" value="NZ_CP027476.1"/>
</dbReference>
<dbReference type="SMR" id="Q2FEK1"/>
<dbReference type="KEGG" id="saa:SAUSA300_2242"/>
<dbReference type="HOGENOM" id="CLU_049215_4_2_9"/>
<dbReference type="OMA" id="QFLYTEM"/>
<dbReference type="Proteomes" id="UP000001939">
    <property type="component" value="Chromosome"/>
</dbReference>
<dbReference type="GO" id="GO:0005737">
    <property type="term" value="C:cytoplasm"/>
    <property type="evidence" value="ECO:0007669"/>
    <property type="project" value="UniProtKB-SubCell"/>
</dbReference>
<dbReference type="GO" id="GO:0016151">
    <property type="term" value="F:nickel cation binding"/>
    <property type="evidence" value="ECO:0007669"/>
    <property type="project" value="UniProtKB-UniRule"/>
</dbReference>
<dbReference type="Gene3D" id="1.10.4190.10">
    <property type="entry name" value="Urease accessory protein UreF"/>
    <property type="match status" value="1"/>
</dbReference>
<dbReference type="HAMAP" id="MF_01385">
    <property type="entry name" value="UreF"/>
    <property type="match status" value="1"/>
</dbReference>
<dbReference type="InterPro" id="IPR002639">
    <property type="entry name" value="UreF"/>
</dbReference>
<dbReference type="InterPro" id="IPR038277">
    <property type="entry name" value="UreF_sf"/>
</dbReference>
<dbReference type="PANTHER" id="PTHR33620">
    <property type="entry name" value="UREASE ACCESSORY PROTEIN F"/>
    <property type="match status" value="1"/>
</dbReference>
<dbReference type="PANTHER" id="PTHR33620:SF1">
    <property type="entry name" value="UREASE ACCESSORY PROTEIN F"/>
    <property type="match status" value="1"/>
</dbReference>
<dbReference type="Pfam" id="PF01730">
    <property type="entry name" value="UreF"/>
    <property type="match status" value="1"/>
</dbReference>
<dbReference type="PIRSF" id="PIRSF009467">
    <property type="entry name" value="Ureas_acces_UreF"/>
    <property type="match status" value="1"/>
</dbReference>
<accession>Q2FEK1</accession>
<protein>
    <recommendedName>
        <fullName evidence="1">Urease accessory protein UreF</fullName>
    </recommendedName>
</protein>
<reference key="1">
    <citation type="journal article" date="2006" name="Lancet">
        <title>Complete genome sequence of USA300, an epidemic clone of community-acquired meticillin-resistant Staphylococcus aureus.</title>
        <authorList>
            <person name="Diep B.A."/>
            <person name="Gill S.R."/>
            <person name="Chang R.F."/>
            <person name="Phan T.H."/>
            <person name="Chen J.H."/>
            <person name="Davidson M.G."/>
            <person name="Lin F."/>
            <person name="Lin J."/>
            <person name="Carleton H.A."/>
            <person name="Mongodin E.F."/>
            <person name="Sensabaugh G.F."/>
            <person name="Perdreau-Remington F."/>
        </authorList>
    </citation>
    <scope>NUCLEOTIDE SEQUENCE [LARGE SCALE GENOMIC DNA]</scope>
    <source>
        <strain>USA300</strain>
    </source>
</reference>
<keyword id="KW-0143">Chaperone</keyword>
<keyword id="KW-0963">Cytoplasm</keyword>
<keyword id="KW-0996">Nickel insertion</keyword>
<sequence length="229" mass="26480">MIDHTHLRLFQFCDSQFPTGAFSHSFGLETYIQRNIIHDDHTFIAWLKMFLQEQLTYSDGLAMRLVYDALENDDTQKVLHIDKLMFVQNLPKETRVGAKQMGTRMVKLALELYNSPWIAWYHQQMQDKKAKLNPAICFTMLGHHLGVDIETIIDYYLYQNVSSLTQNAVRAIPLGQTAGQKIVTHMIPYIEGTRKQIFELKEADFGMTAPGLELNQMAHENVNVRIFIS</sequence>
<organism>
    <name type="scientific">Staphylococcus aureus (strain USA300)</name>
    <dbReference type="NCBI Taxonomy" id="367830"/>
    <lineage>
        <taxon>Bacteria</taxon>
        <taxon>Bacillati</taxon>
        <taxon>Bacillota</taxon>
        <taxon>Bacilli</taxon>
        <taxon>Bacillales</taxon>
        <taxon>Staphylococcaceae</taxon>
        <taxon>Staphylococcus</taxon>
    </lineage>
</organism>